<evidence type="ECO:0000255" key="1">
    <source>
        <dbReference type="HAMAP-Rule" id="MF_00278"/>
    </source>
</evidence>
<keyword id="KW-0028">Amino-acid biosynthesis</keyword>
<keyword id="KW-0963">Cytoplasm</keyword>
<keyword id="KW-0315">Glutamine amidotransferase</keyword>
<keyword id="KW-0368">Histidine biosynthesis</keyword>
<keyword id="KW-0378">Hydrolase</keyword>
<keyword id="KW-0456">Lyase</keyword>
<dbReference type="EC" id="4.3.2.10" evidence="1"/>
<dbReference type="EC" id="3.5.1.2" evidence="1"/>
<dbReference type="EMBL" id="CP001336">
    <property type="protein sequence ID" value="ACL19547.1"/>
    <property type="molecule type" value="Genomic_DNA"/>
</dbReference>
<dbReference type="RefSeq" id="WP_015943474.1">
    <property type="nucleotide sequence ID" value="NC_011830.1"/>
</dbReference>
<dbReference type="SMR" id="B8FP22"/>
<dbReference type="MEROPS" id="C26.965"/>
<dbReference type="KEGG" id="dhd:Dhaf_1495"/>
<dbReference type="HOGENOM" id="CLU_071837_2_2_9"/>
<dbReference type="UniPathway" id="UPA00031">
    <property type="reaction ID" value="UER00010"/>
</dbReference>
<dbReference type="Proteomes" id="UP000007726">
    <property type="component" value="Chromosome"/>
</dbReference>
<dbReference type="GO" id="GO:0005737">
    <property type="term" value="C:cytoplasm"/>
    <property type="evidence" value="ECO:0007669"/>
    <property type="project" value="UniProtKB-SubCell"/>
</dbReference>
<dbReference type="GO" id="GO:0004359">
    <property type="term" value="F:glutaminase activity"/>
    <property type="evidence" value="ECO:0007669"/>
    <property type="project" value="UniProtKB-EC"/>
</dbReference>
<dbReference type="GO" id="GO:0000107">
    <property type="term" value="F:imidazoleglycerol-phosphate synthase activity"/>
    <property type="evidence" value="ECO:0007669"/>
    <property type="project" value="UniProtKB-UniRule"/>
</dbReference>
<dbReference type="GO" id="GO:0016829">
    <property type="term" value="F:lyase activity"/>
    <property type="evidence" value="ECO:0007669"/>
    <property type="project" value="UniProtKB-KW"/>
</dbReference>
<dbReference type="GO" id="GO:0000105">
    <property type="term" value="P:L-histidine biosynthetic process"/>
    <property type="evidence" value="ECO:0007669"/>
    <property type="project" value="UniProtKB-UniRule"/>
</dbReference>
<dbReference type="CDD" id="cd01748">
    <property type="entry name" value="GATase1_IGP_Synthase"/>
    <property type="match status" value="1"/>
</dbReference>
<dbReference type="Gene3D" id="3.40.50.880">
    <property type="match status" value="1"/>
</dbReference>
<dbReference type="HAMAP" id="MF_00278">
    <property type="entry name" value="HisH"/>
    <property type="match status" value="1"/>
</dbReference>
<dbReference type="InterPro" id="IPR029062">
    <property type="entry name" value="Class_I_gatase-like"/>
</dbReference>
<dbReference type="InterPro" id="IPR017926">
    <property type="entry name" value="GATASE"/>
</dbReference>
<dbReference type="InterPro" id="IPR010139">
    <property type="entry name" value="Imidazole-glycPsynth_HisH"/>
</dbReference>
<dbReference type="NCBIfam" id="TIGR01855">
    <property type="entry name" value="IMP_synth_hisH"/>
    <property type="match status" value="1"/>
</dbReference>
<dbReference type="PANTHER" id="PTHR42701">
    <property type="entry name" value="IMIDAZOLE GLYCEROL PHOSPHATE SYNTHASE SUBUNIT HISH"/>
    <property type="match status" value="1"/>
</dbReference>
<dbReference type="PANTHER" id="PTHR42701:SF1">
    <property type="entry name" value="IMIDAZOLE GLYCEROL PHOSPHATE SYNTHASE SUBUNIT HISH"/>
    <property type="match status" value="1"/>
</dbReference>
<dbReference type="Pfam" id="PF00117">
    <property type="entry name" value="GATase"/>
    <property type="match status" value="1"/>
</dbReference>
<dbReference type="PIRSF" id="PIRSF000495">
    <property type="entry name" value="Amidotransf_hisH"/>
    <property type="match status" value="1"/>
</dbReference>
<dbReference type="SUPFAM" id="SSF52317">
    <property type="entry name" value="Class I glutamine amidotransferase-like"/>
    <property type="match status" value="1"/>
</dbReference>
<dbReference type="PROSITE" id="PS51273">
    <property type="entry name" value="GATASE_TYPE_1"/>
    <property type="match status" value="1"/>
</dbReference>
<protein>
    <recommendedName>
        <fullName evidence="1">Imidazole glycerol phosphate synthase subunit HisH</fullName>
        <ecNumber evidence="1">4.3.2.10</ecNumber>
    </recommendedName>
    <alternativeName>
        <fullName evidence="1">IGP synthase glutaminase subunit</fullName>
        <ecNumber evidence="1">3.5.1.2</ecNumber>
    </alternativeName>
    <alternativeName>
        <fullName evidence="1">IGP synthase subunit HisH</fullName>
    </alternativeName>
    <alternativeName>
        <fullName evidence="1">ImGP synthase subunit HisH</fullName>
        <shortName evidence="1">IGPS subunit HisH</shortName>
    </alternativeName>
</protein>
<comment type="function">
    <text evidence="1">IGPS catalyzes the conversion of PRFAR and glutamine to IGP, AICAR and glutamate. The HisH subunit catalyzes the hydrolysis of glutamine to glutamate and ammonia as part of the synthesis of IGP and AICAR. The resulting ammonia molecule is channeled to the active site of HisF.</text>
</comment>
<comment type="catalytic activity">
    <reaction evidence="1">
        <text>5-[(5-phospho-1-deoxy-D-ribulos-1-ylimino)methylamino]-1-(5-phospho-beta-D-ribosyl)imidazole-4-carboxamide + L-glutamine = D-erythro-1-(imidazol-4-yl)glycerol 3-phosphate + 5-amino-1-(5-phospho-beta-D-ribosyl)imidazole-4-carboxamide + L-glutamate + H(+)</text>
        <dbReference type="Rhea" id="RHEA:24793"/>
        <dbReference type="ChEBI" id="CHEBI:15378"/>
        <dbReference type="ChEBI" id="CHEBI:29985"/>
        <dbReference type="ChEBI" id="CHEBI:58278"/>
        <dbReference type="ChEBI" id="CHEBI:58359"/>
        <dbReference type="ChEBI" id="CHEBI:58475"/>
        <dbReference type="ChEBI" id="CHEBI:58525"/>
        <dbReference type="EC" id="4.3.2.10"/>
    </reaction>
</comment>
<comment type="catalytic activity">
    <reaction evidence="1">
        <text>L-glutamine + H2O = L-glutamate + NH4(+)</text>
        <dbReference type="Rhea" id="RHEA:15889"/>
        <dbReference type="ChEBI" id="CHEBI:15377"/>
        <dbReference type="ChEBI" id="CHEBI:28938"/>
        <dbReference type="ChEBI" id="CHEBI:29985"/>
        <dbReference type="ChEBI" id="CHEBI:58359"/>
        <dbReference type="EC" id="3.5.1.2"/>
    </reaction>
</comment>
<comment type="pathway">
    <text evidence="1">Amino-acid biosynthesis; L-histidine biosynthesis; L-histidine from 5-phospho-alpha-D-ribose 1-diphosphate: step 5/9.</text>
</comment>
<comment type="subunit">
    <text evidence="1">Heterodimer of HisH and HisF.</text>
</comment>
<comment type="subcellular location">
    <subcellularLocation>
        <location evidence="1">Cytoplasm</location>
    </subcellularLocation>
</comment>
<name>HIS5_DESHD</name>
<gene>
    <name evidence="1" type="primary">hisH</name>
    <name type="ordered locus">Dhaf_1495</name>
</gene>
<feature type="chain" id="PRO_1000132540" description="Imidazole glycerol phosphate synthase subunit HisH">
    <location>
        <begin position="1"/>
        <end position="211"/>
    </location>
</feature>
<feature type="domain" description="Glutamine amidotransferase type-1" evidence="1">
    <location>
        <begin position="1"/>
        <end position="206"/>
    </location>
</feature>
<feature type="active site" description="Nucleophile" evidence="1">
    <location>
        <position position="79"/>
    </location>
</feature>
<feature type="active site" evidence="1">
    <location>
        <position position="181"/>
    </location>
</feature>
<feature type="active site" evidence="1">
    <location>
        <position position="183"/>
    </location>
</feature>
<accession>B8FP22</accession>
<sequence>MIGIIDYGRGNLRSVEKALWKLGYPAKVLESPAELMAVKGIILPGVGAFADAMAALEEKGWIQPLIHYAHSGKPFLGICLGMQVLFEVGEEHGEHKGLGLLPGRVVRFPAGRKIPHMGWNTLHQEKPCRLLEGIPDEAYFYFVHSYYVASEEQEILAGMSDYGVPFPALVGRDNVWGAQFHPEKSSPWGLKLLENFGKWVNEDATVSSHRS</sequence>
<reference key="1">
    <citation type="journal article" date="2012" name="BMC Microbiol.">
        <title>Genome sequence of Desulfitobacterium hafniense DCB-2, a Gram-positive anaerobe capable of dehalogenation and metal reduction.</title>
        <authorList>
            <person name="Kim S.H."/>
            <person name="Harzman C."/>
            <person name="Davis J.K."/>
            <person name="Hutcheson R."/>
            <person name="Broderick J.B."/>
            <person name="Marsh T.L."/>
            <person name="Tiedje J.M."/>
        </authorList>
    </citation>
    <scope>NUCLEOTIDE SEQUENCE [LARGE SCALE GENOMIC DNA]</scope>
    <source>
        <strain>DSM 10664 / DCB-2</strain>
    </source>
</reference>
<proteinExistence type="inferred from homology"/>
<organism>
    <name type="scientific">Desulfitobacterium hafniense (strain DSM 10664 / DCB-2)</name>
    <dbReference type="NCBI Taxonomy" id="272564"/>
    <lineage>
        <taxon>Bacteria</taxon>
        <taxon>Bacillati</taxon>
        <taxon>Bacillota</taxon>
        <taxon>Clostridia</taxon>
        <taxon>Eubacteriales</taxon>
        <taxon>Desulfitobacteriaceae</taxon>
        <taxon>Desulfitobacterium</taxon>
    </lineage>
</organism>